<sequence length="171" mass="18519">MHQVISATTNPAKIQAILQAFEEIFGEGSCHITPVAVESGVPEQPFGSEETRAGARNRVDNARRLHPQADFWVAIEAGIDDDATFSWVVIDNGVQRGEARSATLPLPAVILDRVRQGEALGPVMSQYTGIDEIGRKEGAIGVFTAGKLTRSSVYYQAVILALSPFHNAVYR</sequence>
<protein>
    <recommendedName>
        <fullName evidence="1">Inosine/xanthosine triphosphatase</fullName>
        <shortName evidence="1">ITPase/XTPase</shortName>
        <ecNumber evidence="1">3.6.1.73</ecNumber>
    </recommendedName>
    <alternativeName>
        <fullName evidence="1">Non-canonical purine NTP phosphatase</fullName>
    </alternativeName>
    <alternativeName>
        <fullName evidence="1">Non-standard purine NTP phosphatase</fullName>
    </alternativeName>
    <alternativeName>
        <fullName evidence="1">Nucleoside-triphosphate phosphatase</fullName>
        <shortName evidence="1">NTPase</shortName>
    </alternativeName>
</protein>
<accession>P39432</accession>
<organism>
    <name type="scientific">Salmonella typhimurium (strain LT2 / SGSC1412 / ATCC 700720)</name>
    <dbReference type="NCBI Taxonomy" id="99287"/>
    <lineage>
        <taxon>Bacteria</taxon>
        <taxon>Pseudomonadati</taxon>
        <taxon>Pseudomonadota</taxon>
        <taxon>Gammaproteobacteria</taxon>
        <taxon>Enterobacterales</taxon>
        <taxon>Enterobacteriaceae</taxon>
        <taxon>Salmonella</taxon>
    </lineage>
</organism>
<name>NCPP_SALTY</name>
<reference key="1">
    <citation type="journal article" date="2001" name="Nature">
        <title>Complete genome sequence of Salmonella enterica serovar Typhimurium LT2.</title>
        <authorList>
            <person name="McClelland M."/>
            <person name="Sanderson K.E."/>
            <person name="Spieth J."/>
            <person name="Clifton S.W."/>
            <person name="Latreille P."/>
            <person name="Courtney L."/>
            <person name="Porwollik S."/>
            <person name="Ali J."/>
            <person name="Dante M."/>
            <person name="Du F."/>
            <person name="Hou S."/>
            <person name="Layman D."/>
            <person name="Leonard S."/>
            <person name="Nguyen C."/>
            <person name="Scott K."/>
            <person name="Holmes A."/>
            <person name="Grewal N."/>
            <person name="Mulvaney E."/>
            <person name="Ryan E."/>
            <person name="Sun H."/>
            <person name="Florea L."/>
            <person name="Miller W."/>
            <person name="Stoneking T."/>
            <person name="Nhan M."/>
            <person name="Waterston R."/>
            <person name="Wilson R.K."/>
        </authorList>
    </citation>
    <scope>NUCLEOTIDE SEQUENCE [LARGE SCALE GENOMIC DNA]</scope>
    <source>
        <strain>LT2 / SGSC1412 / ATCC 700720</strain>
    </source>
</reference>
<reference key="2">
    <citation type="submission" date="2009-02" db="PDB data bank">
        <title>The crystal structure of hypothetical upf0244 protein yjjx at resolution 1.68 angstrom.</title>
        <authorList>
            <consortium name="Midwest center for structural genomics (MCSG)"/>
        </authorList>
    </citation>
    <scope>X-RAY CRYSTALLOGRAPHY (1.68 ANGSTROMS)</scope>
</reference>
<gene>
    <name type="primary">yjjX</name>
    <name type="ordered locus">STM4584</name>
</gene>
<keyword id="KW-0002">3D-structure</keyword>
<keyword id="KW-0378">Hydrolase</keyword>
<keyword id="KW-0460">Magnesium</keyword>
<keyword id="KW-0464">Manganese</keyword>
<keyword id="KW-0479">Metal-binding</keyword>
<keyword id="KW-0546">Nucleotide metabolism</keyword>
<keyword id="KW-0547">Nucleotide-binding</keyword>
<keyword id="KW-1185">Reference proteome</keyword>
<proteinExistence type="evidence at protein level"/>
<dbReference type="EC" id="3.6.1.73" evidence="1"/>
<dbReference type="EMBL" id="AE006468">
    <property type="protein sequence ID" value="AAL23399.1"/>
    <property type="molecule type" value="Genomic_DNA"/>
</dbReference>
<dbReference type="RefSeq" id="NP_463440.1">
    <property type="nucleotide sequence ID" value="NC_003197.2"/>
</dbReference>
<dbReference type="RefSeq" id="WP_000554311.1">
    <property type="nucleotide sequence ID" value="NC_003197.2"/>
</dbReference>
<dbReference type="PDB" id="1U14">
    <property type="method" value="X-ray"/>
    <property type="resolution" value="1.68 A"/>
    <property type="chains" value="A=1-171"/>
</dbReference>
<dbReference type="PDBsum" id="1U14"/>
<dbReference type="SMR" id="P39432"/>
<dbReference type="STRING" id="99287.STM4584"/>
<dbReference type="PaxDb" id="99287-STM4584"/>
<dbReference type="DNASU" id="1256110"/>
<dbReference type="GeneID" id="1256110"/>
<dbReference type="KEGG" id="stm:STM4584"/>
<dbReference type="PATRIC" id="fig|99287.12.peg.4827"/>
<dbReference type="HOGENOM" id="CLU_087417_1_0_6"/>
<dbReference type="OMA" id="ADYWVGI"/>
<dbReference type="PhylomeDB" id="P39432"/>
<dbReference type="BioCyc" id="SENT99287:STM4584-MONOMER"/>
<dbReference type="EvolutionaryTrace" id="P39432"/>
<dbReference type="Proteomes" id="UP000001014">
    <property type="component" value="Chromosome"/>
</dbReference>
<dbReference type="GO" id="GO:0103023">
    <property type="term" value="F:ITPase activity"/>
    <property type="evidence" value="ECO:0007669"/>
    <property type="project" value="UniProtKB-EC"/>
</dbReference>
<dbReference type="GO" id="GO:0046872">
    <property type="term" value="F:metal ion binding"/>
    <property type="evidence" value="ECO:0007669"/>
    <property type="project" value="UniProtKB-KW"/>
</dbReference>
<dbReference type="GO" id="GO:0000166">
    <property type="term" value="F:nucleotide binding"/>
    <property type="evidence" value="ECO:0007669"/>
    <property type="project" value="UniProtKB-KW"/>
</dbReference>
<dbReference type="GO" id="GO:0017111">
    <property type="term" value="F:ribonucleoside triphosphate phosphatase activity"/>
    <property type="evidence" value="ECO:0000250"/>
    <property type="project" value="UniProtKB"/>
</dbReference>
<dbReference type="GO" id="GO:0009117">
    <property type="term" value="P:nucleotide metabolic process"/>
    <property type="evidence" value="ECO:0007669"/>
    <property type="project" value="UniProtKB-KW"/>
</dbReference>
<dbReference type="GO" id="GO:0006772">
    <property type="term" value="P:thiamine metabolic process"/>
    <property type="evidence" value="ECO:0000318"/>
    <property type="project" value="GO_Central"/>
</dbReference>
<dbReference type="FunFam" id="3.90.950.10:FF:000002">
    <property type="entry name" value="Inosine/xanthosine triphosphatase"/>
    <property type="match status" value="1"/>
</dbReference>
<dbReference type="Gene3D" id="3.90.950.10">
    <property type="match status" value="1"/>
</dbReference>
<dbReference type="HAMAP" id="MF_00648">
    <property type="entry name" value="Non_canon_purine_NTPase_YjjX"/>
    <property type="match status" value="1"/>
</dbReference>
<dbReference type="InterPro" id="IPR029001">
    <property type="entry name" value="ITPase-like_fam"/>
</dbReference>
<dbReference type="InterPro" id="IPR002786">
    <property type="entry name" value="Non_canon_purine_NTPase"/>
</dbReference>
<dbReference type="InterPro" id="IPR026533">
    <property type="entry name" value="NTPase/PRRC1"/>
</dbReference>
<dbReference type="InterPro" id="IPR050299">
    <property type="entry name" value="YjjX_NTPase"/>
</dbReference>
<dbReference type="NCBIfam" id="TIGR00258">
    <property type="entry name" value="inosine/xanthosine triphosphatase"/>
    <property type="match status" value="1"/>
</dbReference>
<dbReference type="NCBIfam" id="NF003459">
    <property type="entry name" value="PRK05074.1"/>
    <property type="match status" value="1"/>
</dbReference>
<dbReference type="PANTHER" id="PTHR34699">
    <property type="match status" value="1"/>
</dbReference>
<dbReference type="PANTHER" id="PTHR34699:SF2">
    <property type="entry name" value="NON-CANONICAL PURINE NTP PHOSPHATASE_PRRC1 DOMAIN-CONTAINING PROTEIN"/>
    <property type="match status" value="1"/>
</dbReference>
<dbReference type="Pfam" id="PF01931">
    <property type="entry name" value="NTPase_I-T"/>
    <property type="match status" value="1"/>
</dbReference>
<dbReference type="SUPFAM" id="SSF52972">
    <property type="entry name" value="ITPase-like"/>
    <property type="match status" value="1"/>
</dbReference>
<evidence type="ECO:0000255" key="1">
    <source>
        <dbReference type="HAMAP-Rule" id="MF_00648"/>
    </source>
</evidence>
<evidence type="ECO:0007829" key="2">
    <source>
        <dbReference type="PDB" id="1U14"/>
    </source>
</evidence>
<comment type="function">
    <text evidence="1">Phosphatase that hydrolyzes non-canonical purine nucleotides such as XTP and ITP to their respective diphosphate derivatives. Probably excludes non-canonical purines from DNA/RNA precursor pool, thus preventing their incorporation into DNA/RNA and avoiding chromosomal lesions.</text>
</comment>
<comment type="catalytic activity">
    <reaction evidence="1">
        <text>XTP + H2O = XDP + phosphate + H(+)</text>
        <dbReference type="Rhea" id="RHEA:28406"/>
        <dbReference type="ChEBI" id="CHEBI:15377"/>
        <dbReference type="ChEBI" id="CHEBI:15378"/>
        <dbReference type="ChEBI" id="CHEBI:43474"/>
        <dbReference type="ChEBI" id="CHEBI:59884"/>
        <dbReference type="ChEBI" id="CHEBI:61314"/>
        <dbReference type="EC" id="3.6.1.73"/>
    </reaction>
</comment>
<comment type="catalytic activity">
    <reaction evidence="1">
        <text>ITP + H2O = IDP + phosphate + H(+)</text>
        <dbReference type="Rhea" id="RHEA:28330"/>
        <dbReference type="ChEBI" id="CHEBI:15377"/>
        <dbReference type="ChEBI" id="CHEBI:15378"/>
        <dbReference type="ChEBI" id="CHEBI:43474"/>
        <dbReference type="ChEBI" id="CHEBI:58280"/>
        <dbReference type="ChEBI" id="CHEBI:61402"/>
        <dbReference type="EC" id="3.6.1.73"/>
    </reaction>
</comment>
<comment type="cofactor">
    <cofactor evidence="1">
        <name>Mg(2+)</name>
        <dbReference type="ChEBI" id="CHEBI:18420"/>
    </cofactor>
    <cofactor evidence="1">
        <name>Mn(2+)</name>
        <dbReference type="ChEBI" id="CHEBI:29035"/>
    </cofactor>
    <text evidence="1">Binds 1 divalent metal cation per subunit; can use either Mg(2+) or Mn(2+).</text>
</comment>
<comment type="subunit">
    <text evidence="1">Homodimer.</text>
</comment>
<comment type="similarity">
    <text evidence="1">Belongs to the YjjX NTPase family.</text>
</comment>
<feature type="chain" id="PRO_0000156348" description="Inosine/xanthosine triphosphatase">
    <location>
        <begin position="1"/>
        <end position="171"/>
    </location>
</feature>
<feature type="binding site" evidence="1">
    <location>
        <begin position="8"/>
        <end position="13"/>
    </location>
    <ligand>
        <name>substrate</name>
    </ligand>
</feature>
<feature type="binding site" evidence="1">
    <location>
        <position position="38"/>
    </location>
    <ligand>
        <name>Mg(2+)</name>
        <dbReference type="ChEBI" id="CHEBI:18420"/>
    </ligand>
</feature>
<feature type="binding site" evidence="1">
    <location>
        <position position="68"/>
    </location>
    <ligand>
        <name>Mg(2+)</name>
        <dbReference type="ChEBI" id="CHEBI:18420"/>
    </ligand>
</feature>
<feature type="strand" evidence="2">
    <location>
        <begin position="2"/>
        <end position="7"/>
    </location>
</feature>
<feature type="helix" evidence="2">
    <location>
        <begin position="11"/>
        <end position="25"/>
    </location>
</feature>
<feature type="strand" evidence="2">
    <location>
        <begin position="30"/>
        <end position="34"/>
    </location>
</feature>
<feature type="helix" evidence="2">
    <location>
        <begin position="48"/>
        <end position="65"/>
    </location>
</feature>
<feature type="strand" evidence="2">
    <location>
        <begin position="70"/>
        <end position="80"/>
    </location>
</feature>
<feature type="strand" evidence="2">
    <location>
        <begin position="83"/>
        <end position="91"/>
    </location>
</feature>
<feature type="strand" evidence="2">
    <location>
        <begin position="96"/>
        <end position="100"/>
    </location>
</feature>
<feature type="helix" evidence="2">
    <location>
        <begin position="108"/>
        <end position="114"/>
    </location>
</feature>
<feature type="turn" evidence="2">
    <location>
        <begin position="115"/>
        <end position="117"/>
    </location>
</feature>
<feature type="helix" evidence="2">
    <location>
        <begin position="120"/>
        <end position="128"/>
    </location>
</feature>
<feature type="helix" evidence="2">
    <location>
        <begin position="133"/>
        <end position="135"/>
    </location>
</feature>
<feature type="helix" evidence="2">
    <location>
        <begin position="138"/>
        <end position="143"/>
    </location>
</feature>
<feature type="turn" evidence="2">
    <location>
        <begin position="144"/>
        <end position="146"/>
    </location>
</feature>
<feature type="helix" evidence="2">
    <location>
        <begin position="150"/>
        <end position="161"/>
    </location>
</feature>
<feature type="helix" evidence="2">
    <location>
        <begin position="163"/>
        <end position="165"/>
    </location>
</feature>